<comment type="function">
    <text evidence="2">Transaldolase is important for the balance of metabolites in the pentose-phosphate pathway.</text>
</comment>
<comment type="catalytic activity">
    <reaction evidence="2">
        <text>D-sedoheptulose 7-phosphate + D-glyceraldehyde 3-phosphate = D-erythrose 4-phosphate + beta-D-fructose 6-phosphate</text>
        <dbReference type="Rhea" id="RHEA:17053"/>
        <dbReference type="ChEBI" id="CHEBI:16897"/>
        <dbReference type="ChEBI" id="CHEBI:57483"/>
        <dbReference type="ChEBI" id="CHEBI:57634"/>
        <dbReference type="ChEBI" id="CHEBI:59776"/>
        <dbReference type="EC" id="2.2.1.2"/>
    </reaction>
</comment>
<comment type="pathway">
    <text evidence="2">Carbohydrate degradation; pentose phosphate pathway; D-glyceraldehyde 3-phosphate and beta-D-fructose 6-phosphate from D-ribose 5-phosphate and D-xylulose 5-phosphate (non-oxidative stage): step 2/3.</text>
</comment>
<comment type="subunit">
    <text evidence="1">Homodimer.</text>
</comment>
<comment type="subcellular location">
    <subcellularLocation>
        <location evidence="2">Cytoplasm</location>
    </subcellularLocation>
</comment>
<comment type="similarity">
    <text evidence="2">Belongs to the transaldolase family. Type 1 subfamily.</text>
</comment>
<sequence>MNQLDYIKKFTNVVIDSGNIKYIKKYSPKDVTTNPSLILRESKSKHYYPLLMDAISYAKKKGGNLNSYIINANDKLLVNIGREILKIIDGRISIEIDVRLSFSYLDLIIRAKKIISLYNSYGIENNRILIKIAATWEGIQAAKFLEKSGINCNLTLIFSLVQAIACAESNVYLISPFVGRVNDWYIKNFKLNKNSKIDPGVKLVYKIFYFYQKYGYKTFVMGASFRNIDQIISIIGCDAITISPDFVNKLNNLKLKKIKNFIRVNLESKIKKNKLLEKEFRWKFNQNFMAVEKLSEGIRLFLRDQKKIDSFFLKKFKSG</sequence>
<accession>Q8D1X3</accession>
<name>TAL_WIGBR</name>
<keyword id="KW-0963">Cytoplasm</keyword>
<keyword id="KW-0570">Pentose shunt</keyword>
<keyword id="KW-1185">Reference proteome</keyword>
<keyword id="KW-0704">Schiff base</keyword>
<keyword id="KW-0808">Transferase</keyword>
<reference key="1">
    <citation type="journal article" date="2002" name="Nat. Genet.">
        <title>Genome sequence of the endocellular obligate symbiont of tsetse flies, Wigglesworthia glossinidia.</title>
        <authorList>
            <person name="Akman L."/>
            <person name="Yamashita A."/>
            <person name="Watanabe H."/>
            <person name="Oshima K."/>
            <person name="Shiba T."/>
            <person name="Hattori M."/>
            <person name="Aksoy S."/>
        </authorList>
    </citation>
    <scope>NUCLEOTIDE SEQUENCE [LARGE SCALE GENOMIC DNA]</scope>
</reference>
<feature type="chain" id="PRO_0000173624" description="Transaldolase">
    <location>
        <begin position="1"/>
        <end position="319"/>
    </location>
</feature>
<feature type="active site" description="Schiff-base intermediate with substrate" evidence="2">
    <location>
        <position position="131"/>
    </location>
</feature>
<protein>
    <recommendedName>
        <fullName evidence="2">Transaldolase</fullName>
        <ecNumber evidence="2">2.2.1.2</ecNumber>
    </recommendedName>
</protein>
<proteinExistence type="inferred from homology"/>
<dbReference type="EC" id="2.2.1.2" evidence="2"/>
<dbReference type="EMBL" id="BA000021">
    <property type="protein sequence ID" value="BAC24729.1"/>
    <property type="molecule type" value="Genomic_DNA"/>
</dbReference>
<dbReference type="SMR" id="Q8D1X3"/>
<dbReference type="STRING" id="36870.gene:10369092"/>
<dbReference type="KEGG" id="wbr:talA"/>
<dbReference type="eggNOG" id="COG0176">
    <property type="taxonomic scope" value="Bacteria"/>
</dbReference>
<dbReference type="HOGENOM" id="CLU_047470_0_1_6"/>
<dbReference type="OrthoDB" id="9809101at2"/>
<dbReference type="UniPathway" id="UPA00115">
    <property type="reaction ID" value="UER00414"/>
</dbReference>
<dbReference type="Proteomes" id="UP000000562">
    <property type="component" value="Chromosome"/>
</dbReference>
<dbReference type="GO" id="GO:0005829">
    <property type="term" value="C:cytosol"/>
    <property type="evidence" value="ECO:0007669"/>
    <property type="project" value="TreeGrafter"/>
</dbReference>
<dbReference type="GO" id="GO:0004801">
    <property type="term" value="F:transaldolase activity"/>
    <property type="evidence" value="ECO:0000250"/>
    <property type="project" value="UniProtKB"/>
</dbReference>
<dbReference type="GO" id="GO:0005975">
    <property type="term" value="P:carbohydrate metabolic process"/>
    <property type="evidence" value="ECO:0007669"/>
    <property type="project" value="InterPro"/>
</dbReference>
<dbReference type="GO" id="GO:0006098">
    <property type="term" value="P:pentose-phosphate shunt"/>
    <property type="evidence" value="ECO:0007669"/>
    <property type="project" value="UniProtKB-UniRule"/>
</dbReference>
<dbReference type="CDD" id="cd00957">
    <property type="entry name" value="Transaldolase_TalAB"/>
    <property type="match status" value="1"/>
</dbReference>
<dbReference type="Gene3D" id="3.20.20.70">
    <property type="entry name" value="Aldolase class I"/>
    <property type="match status" value="1"/>
</dbReference>
<dbReference type="HAMAP" id="MF_00492">
    <property type="entry name" value="Transaldolase_1"/>
    <property type="match status" value="1"/>
</dbReference>
<dbReference type="InterPro" id="IPR013785">
    <property type="entry name" value="Aldolase_TIM"/>
</dbReference>
<dbReference type="InterPro" id="IPR001585">
    <property type="entry name" value="TAL/FSA"/>
</dbReference>
<dbReference type="InterPro" id="IPR004730">
    <property type="entry name" value="Transaldolase_1"/>
</dbReference>
<dbReference type="InterPro" id="IPR018225">
    <property type="entry name" value="Transaldolase_AS"/>
</dbReference>
<dbReference type="PANTHER" id="PTHR10683">
    <property type="entry name" value="TRANSALDOLASE"/>
    <property type="match status" value="1"/>
</dbReference>
<dbReference type="PANTHER" id="PTHR10683:SF18">
    <property type="entry name" value="TRANSALDOLASE"/>
    <property type="match status" value="1"/>
</dbReference>
<dbReference type="Pfam" id="PF00923">
    <property type="entry name" value="TAL_FSA"/>
    <property type="match status" value="1"/>
</dbReference>
<dbReference type="SUPFAM" id="SSF51569">
    <property type="entry name" value="Aldolase"/>
    <property type="match status" value="1"/>
</dbReference>
<dbReference type="PROSITE" id="PS01054">
    <property type="entry name" value="TRANSALDOLASE_1"/>
    <property type="match status" value="1"/>
</dbReference>
<dbReference type="PROSITE" id="PS00958">
    <property type="entry name" value="TRANSALDOLASE_2"/>
    <property type="match status" value="1"/>
</dbReference>
<gene>
    <name evidence="2" type="primary">tal</name>
    <name type="synonym">talA</name>
    <name type="ordered locus">WIGBR5830</name>
</gene>
<organism>
    <name type="scientific">Wigglesworthia glossinidia brevipalpis</name>
    <dbReference type="NCBI Taxonomy" id="36870"/>
    <lineage>
        <taxon>Bacteria</taxon>
        <taxon>Pseudomonadati</taxon>
        <taxon>Pseudomonadota</taxon>
        <taxon>Gammaproteobacteria</taxon>
        <taxon>Enterobacterales</taxon>
        <taxon>Erwiniaceae</taxon>
        <taxon>Wigglesworthia</taxon>
    </lineage>
</organism>
<evidence type="ECO:0000250" key="1"/>
<evidence type="ECO:0000255" key="2">
    <source>
        <dbReference type="HAMAP-Rule" id="MF_00492"/>
    </source>
</evidence>